<comment type="function">
    <text evidence="6">Component of the sequence-specific heterotrimeric transcription factor (NF-Y) which specifically recognizes a 5'-CCAAT-3' box motif found in the promoters of its target genes. NF-Y can function as both an activator and a repressor, depending on its interacting cofactors. NF-YA positively regulates the transcription of the core clock component BMAL1.</text>
</comment>
<comment type="subunit">
    <text evidence="3 4 5 6 7 8">Heterotrimeric transcription factor composed of three components, NF-YA, NF-YB and NF-YC. NF-YB and NF-YC must interact and dimerize for NF-YA association and DNA binding. Interacts with SP1; the interaction is inhibited by glycosylation of SP1. Interacts with ZHX1. Interacts (via N-terminus) with ZHX2 (via homeobox domain). Interacts with ZFX3.</text>
</comment>
<comment type="interaction">
    <interactant intactId="EBI-389739">
        <id>P23511</id>
    </interactant>
    <interactant intactId="EBI-743771">
        <id>Q92624</id>
        <label>APPBP2</label>
    </interactant>
    <organismsDiffer>false</organismsDiffer>
    <experiments>3</experiments>
</comment>
<comment type="interaction">
    <interactant intactId="EBI-389739">
        <id>P23511</id>
    </interactant>
    <interactant intactId="EBI-347804">
        <id>P68400</id>
        <label>CSNK2A1</label>
    </interactant>
    <organismsDiffer>false</organismsDiffer>
    <experiments>4</experiments>
</comment>
<comment type="interaction">
    <interactant intactId="EBI-389739">
        <id>P23511</id>
    </interactant>
    <interactant intactId="EBI-389518">
        <id>P52655</id>
        <label>GTF2A1</label>
    </interactant>
    <organismsDiffer>false</organismsDiffer>
    <experiments>3</experiments>
</comment>
<comment type="interaction">
    <interactant intactId="EBI-389739">
        <id>P23511</id>
    </interactant>
    <interactant intactId="EBI-352851">
        <id>Q9Y383</id>
        <label>LUC7L2</label>
    </interactant>
    <organismsDiffer>false</organismsDiffer>
    <experiments>4</experiments>
</comment>
<comment type="interaction">
    <interactant intactId="EBI-389739">
        <id>P23511</id>
    </interactant>
    <interactant intactId="EBI-389728">
        <id>P25208</id>
        <label>NFYB</label>
    </interactant>
    <organismsDiffer>false</organismsDiffer>
    <experiments>8</experiments>
</comment>
<comment type="interaction">
    <interactant intactId="EBI-389739">
        <id>P23511</id>
    </interactant>
    <interactant intactId="EBI-389755">
        <id>Q13952</id>
        <label>NFYC</label>
    </interactant>
    <organismsDiffer>false</organismsDiffer>
    <experiments>9</experiments>
</comment>
<comment type="interaction">
    <interactant intactId="EBI-389739">
        <id>P23511</id>
    </interactant>
    <interactant intactId="EBI-1389308">
        <id>Q7Z3K3</id>
        <label>POGZ</label>
    </interactant>
    <organismsDiffer>false</organismsDiffer>
    <experiments>3</experiments>
</comment>
<comment type="interaction">
    <interactant intactId="EBI-389739">
        <id>P23511</id>
    </interactant>
    <interactant intactId="EBI-398920">
        <id>Q07955</id>
        <label>SRSF1</label>
    </interactant>
    <organismsDiffer>false</organismsDiffer>
    <experiments>5</experiments>
</comment>
<comment type="interaction">
    <interactant intactId="EBI-389739">
        <id>P23511</id>
    </interactant>
    <interactant intactId="EBI-366083">
        <id>P04637</id>
        <label>TP53</label>
    </interactant>
    <organismsDiffer>false</organismsDiffer>
    <experiments>11</experiments>
</comment>
<comment type="interaction">
    <interactant intactId="EBI-11061759">
        <id>P23511-2</id>
    </interactant>
    <interactant intactId="EBI-930964">
        <id>P54253</id>
        <label>ATXN1</label>
    </interactant>
    <organismsDiffer>false</organismsDiffer>
    <experiments>3</experiments>
</comment>
<comment type="interaction">
    <interactant intactId="EBI-11061759">
        <id>P23511-2</id>
    </interactant>
    <interactant intactId="EBI-11524452">
        <id>Q8N9N5-2</id>
        <label>BANP</label>
    </interactant>
    <organismsDiffer>false</organismsDiffer>
    <experiments>3</experiments>
</comment>
<comment type="interaction">
    <interactant intactId="EBI-11061759">
        <id>P23511-2</id>
    </interactant>
    <interactant intactId="EBI-347804">
        <id>P68400</id>
        <label>CSNK2A1</label>
    </interactant>
    <organismsDiffer>false</organismsDiffer>
    <experiments>3</experiments>
</comment>
<comment type="interaction">
    <interactant intactId="EBI-11061759">
        <id>P23511-2</id>
    </interactant>
    <interactant intactId="EBI-739789">
        <id>Q92997</id>
        <label>DVL3</label>
    </interactant>
    <organismsDiffer>false</organismsDiffer>
    <experiments>3</experiments>
</comment>
<comment type="interaction">
    <interactant intactId="EBI-11061759">
        <id>P23511-2</id>
    </interactant>
    <interactant intactId="EBI-389518">
        <id>P52655</id>
        <label>GTF2A1</label>
    </interactant>
    <organismsDiffer>false</organismsDiffer>
    <experiments>3</experiments>
</comment>
<comment type="interaction">
    <interactant intactId="EBI-11061759">
        <id>P23511-2</id>
    </interactant>
    <interactant intactId="EBI-352851">
        <id>Q9Y383</id>
        <label>LUC7L2</label>
    </interactant>
    <organismsDiffer>false</organismsDiffer>
    <experiments>3</experiments>
</comment>
<comment type="interaction">
    <interactant intactId="EBI-11061759">
        <id>P23511-2</id>
    </interactant>
    <interactant intactId="EBI-389728">
        <id>P25208</id>
        <label>NFYB</label>
    </interactant>
    <organismsDiffer>false</organismsDiffer>
    <experiments>6</experiments>
</comment>
<comment type="interaction">
    <interactant intactId="EBI-11061759">
        <id>P23511-2</id>
    </interactant>
    <interactant intactId="EBI-11956831">
        <id>Q13952-2</id>
        <label>NFYC</label>
    </interactant>
    <organismsDiffer>false</organismsDiffer>
    <experiments>4</experiments>
</comment>
<comment type="interaction">
    <interactant intactId="EBI-11061759">
        <id>P23511-2</id>
    </interactant>
    <interactant intactId="EBI-1389308">
        <id>Q7Z3K3</id>
        <label>POGZ</label>
    </interactant>
    <organismsDiffer>false</organismsDiffer>
    <experiments>3</experiments>
</comment>
<comment type="interaction">
    <interactant intactId="EBI-11061759">
        <id>P23511-2</id>
    </interactant>
    <interactant intactId="EBI-11526590">
        <id>P14859-6</id>
        <label>POU2F1</label>
    </interactant>
    <organismsDiffer>false</organismsDiffer>
    <experiments>5</experiments>
</comment>
<comment type="interaction">
    <interactant intactId="EBI-11061759">
        <id>P23511-2</id>
    </interactant>
    <interactant intactId="EBI-2798044">
        <id>Q2TAL8</id>
        <label>QRICH1</label>
    </interactant>
    <organismsDiffer>false</organismsDiffer>
    <experiments>3</experiments>
</comment>
<comment type="interaction">
    <interactant intactId="EBI-11061759">
        <id>P23511-2</id>
    </interactant>
    <interactant intactId="EBI-11974855">
        <id>Q9Y4C2-2</id>
        <label>TCAF1</label>
    </interactant>
    <organismsDiffer>false</organismsDiffer>
    <experiments>3</experiments>
</comment>
<comment type="interaction">
    <interactant intactId="EBI-11061759">
        <id>P23511-2</id>
    </interactant>
    <interactant intactId="EBI-607755">
        <id>Q9BZL1</id>
        <label>UBL5</label>
    </interactant>
    <organismsDiffer>false</organismsDiffer>
    <experiments>3</experiments>
</comment>
<comment type="interaction">
    <interactant intactId="EBI-11061759">
        <id>P23511-2</id>
    </interactant>
    <interactant intactId="EBI-11980193">
        <id>Q14119</id>
        <label>VEZF1</label>
    </interactant>
    <organismsDiffer>false</organismsDiffer>
    <experiments>3</experiments>
</comment>
<comment type="interaction">
    <interactant intactId="EBI-11061759">
        <id>P23511-2</id>
    </interactant>
    <interactant intactId="EBI-742550">
        <id>Q96K80</id>
        <label>ZC3H10</label>
    </interactant>
    <organismsDiffer>false</organismsDiffer>
    <experiments>3</experiments>
</comment>
<comment type="subcellular location">
    <subcellularLocation>
        <location>Nucleus</location>
    </subcellularLocation>
</comment>
<comment type="alternative products">
    <event type="alternative splicing"/>
    <isoform>
        <id>P23511-1</id>
        <name>Long</name>
        <sequence type="displayed"/>
    </isoform>
    <isoform>
        <id>P23511-2</id>
        <name>Short</name>
        <sequence type="described" ref="VSP_000849"/>
    </isoform>
</comment>
<comment type="similarity">
    <text evidence="1">Belongs to the NFYA/HAP2 subunit family.</text>
</comment>
<accession>P23511</accession>
<accession>Q8IXU0</accession>
<protein>
    <recommendedName>
        <fullName>Nuclear transcription factor Y subunit alpha</fullName>
    </recommendedName>
    <alternativeName>
        <fullName>CAAT box DNA-binding protein subunit A</fullName>
    </alternativeName>
    <alternativeName>
        <fullName>Nuclear transcription factor Y subunit A</fullName>
        <shortName>NF-YA</shortName>
    </alternativeName>
</protein>
<name>NFYA_HUMAN</name>
<gene>
    <name type="primary">NFYA</name>
</gene>
<evidence type="ECO:0000255" key="1">
    <source>
        <dbReference type="PROSITE-ProRule" id="PRU00966"/>
    </source>
</evidence>
<evidence type="ECO:0000256" key="2">
    <source>
        <dbReference type="SAM" id="MobiDB-lite"/>
    </source>
</evidence>
<evidence type="ECO:0000269" key="3">
    <source>
    </source>
</evidence>
<evidence type="ECO:0000269" key="4">
    <source>
    </source>
</evidence>
<evidence type="ECO:0000269" key="5">
    <source>
    </source>
</evidence>
<evidence type="ECO:0000269" key="6">
    <source>
    </source>
</evidence>
<evidence type="ECO:0000269" key="7">
    <source>
    </source>
</evidence>
<evidence type="ECO:0000269" key="8">
    <source>
    </source>
</evidence>
<evidence type="ECO:0000303" key="9">
    <source>
    </source>
</evidence>
<evidence type="ECO:0000305" key="10"/>
<evidence type="ECO:0007744" key="11">
    <source>
    </source>
</evidence>
<evidence type="ECO:0007744" key="12">
    <source>
    </source>
</evidence>
<evidence type="ECO:0007829" key="13">
    <source>
        <dbReference type="PDB" id="4AWL"/>
    </source>
</evidence>
<evidence type="ECO:0007829" key="14">
    <source>
        <dbReference type="PDB" id="6QMS"/>
    </source>
</evidence>
<evidence type="ECO:0007829" key="15">
    <source>
        <dbReference type="PDB" id="8QU4"/>
    </source>
</evidence>
<feature type="chain" id="PRO_0000198768" description="Nuclear transcription factor Y subunit alpha">
    <location>
        <begin position="1"/>
        <end position="347"/>
    </location>
</feature>
<feature type="DNA-binding region" description="NFYA/HAP2-type" evidence="1">
    <location>
        <begin position="296"/>
        <end position="321"/>
    </location>
</feature>
<feature type="region of interest" description="Disordered" evidence="2">
    <location>
        <begin position="299"/>
        <end position="347"/>
    </location>
</feature>
<feature type="short sequence motif" description="Subunit association domain (SAD)">
    <location>
        <begin position="266"/>
        <end position="289"/>
    </location>
</feature>
<feature type="compositionally biased region" description="Basic residues" evidence="2">
    <location>
        <begin position="299"/>
        <end position="310"/>
    </location>
</feature>
<feature type="compositionally biased region" description="Basic and acidic residues" evidence="2">
    <location>
        <begin position="311"/>
        <end position="328"/>
    </location>
</feature>
<feature type="modified residue" description="Phosphoserine" evidence="11 12">
    <location>
        <position position="326"/>
    </location>
</feature>
<feature type="splice variant" id="VSP_000849" description="In isoform Short." evidence="9">
    <location>
        <begin position="26"/>
        <end position="54"/>
    </location>
</feature>
<feature type="sequence conflict" description="In Ref. 3; AAH39244." evidence="10" ref="3">
    <original>H</original>
    <variation>N</variation>
    <location>
        <position position="273"/>
    </location>
</feature>
<feature type="strand" evidence="13">
    <location>
        <begin position="264"/>
        <end position="267"/>
    </location>
</feature>
<feature type="turn" evidence="14">
    <location>
        <begin position="269"/>
        <end position="271"/>
    </location>
</feature>
<feature type="helix" evidence="15">
    <location>
        <begin position="272"/>
        <end position="281"/>
    </location>
</feature>
<feature type="helix" evidence="13">
    <location>
        <begin position="301"/>
        <end position="309"/>
    </location>
</feature>
<feature type="helix" evidence="13">
    <location>
        <begin position="314"/>
        <end position="316"/>
    </location>
</feature>
<organism>
    <name type="scientific">Homo sapiens</name>
    <name type="common">Human</name>
    <dbReference type="NCBI Taxonomy" id="9606"/>
    <lineage>
        <taxon>Eukaryota</taxon>
        <taxon>Metazoa</taxon>
        <taxon>Chordata</taxon>
        <taxon>Craniata</taxon>
        <taxon>Vertebrata</taxon>
        <taxon>Euteleostomi</taxon>
        <taxon>Mammalia</taxon>
        <taxon>Eutheria</taxon>
        <taxon>Euarchontoglires</taxon>
        <taxon>Primates</taxon>
        <taxon>Haplorrhini</taxon>
        <taxon>Catarrhini</taxon>
        <taxon>Hominidae</taxon>
        <taxon>Homo</taxon>
    </lineage>
</organism>
<keyword id="KW-0002">3D-structure</keyword>
<keyword id="KW-0010">Activator</keyword>
<keyword id="KW-0025">Alternative splicing</keyword>
<keyword id="KW-0090">Biological rhythms</keyword>
<keyword id="KW-0238">DNA-binding</keyword>
<keyword id="KW-0539">Nucleus</keyword>
<keyword id="KW-0597">Phosphoprotein</keyword>
<keyword id="KW-1267">Proteomics identification</keyword>
<keyword id="KW-1185">Reference proteome</keyword>
<keyword id="KW-0804">Transcription</keyword>
<keyword id="KW-0805">Transcription regulation</keyword>
<reference key="1">
    <citation type="journal article" date="1992" name="Nucleic Acids Res.">
        <title>Evolutionary variation of the CCAAT-binding transcription factor NF-Y.</title>
        <authorList>
            <person name="Li X.-Y."/>
            <person name="Mantovani R."/>
            <person name="Hooft van Huijsduijnen R."/>
            <person name="Andre I."/>
            <person name="Benoist C."/>
            <person name="Mathis D."/>
        </authorList>
    </citation>
    <scope>NUCLEOTIDE SEQUENCE [MRNA]</scope>
</reference>
<reference key="2">
    <citation type="journal article" date="2003" name="Nature">
        <title>The DNA sequence and analysis of human chromosome 6.</title>
        <authorList>
            <person name="Mungall A.J."/>
            <person name="Palmer S.A."/>
            <person name="Sims S.K."/>
            <person name="Edwards C.A."/>
            <person name="Ashurst J.L."/>
            <person name="Wilming L."/>
            <person name="Jones M.C."/>
            <person name="Horton R."/>
            <person name="Hunt S.E."/>
            <person name="Scott C.E."/>
            <person name="Gilbert J.G.R."/>
            <person name="Clamp M.E."/>
            <person name="Bethel G."/>
            <person name="Milne S."/>
            <person name="Ainscough R."/>
            <person name="Almeida J.P."/>
            <person name="Ambrose K.D."/>
            <person name="Andrews T.D."/>
            <person name="Ashwell R.I.S."/>
            <person name="Babbage A.K."/>
            <person name="Bagguley C.L."/>
            <person name="Bailey J."/>
            <person name="Banerjee R."/>
            <person name="Barker D.J."/>
            <person name="Barlow K.F."/>
            <person name="Bates K."/>
            <person name="Beare D.M."/>
            <person name="Beasley H."/>
            <person name="Beasley O."/>
            <person name="Bird C.P."/>
            <person name="Blakey S.E."/>
            <person name="Bray-Allen S."/>
            <person name="Brook J."/>
            <person name="Brown A.J."/>
            <person name="Brown J.Y."/>
            <person name="Burford D.C."/>
            <person name="Burrill W."/>
            <person name="Burton J."/>
            <person name="Carder C."/>
            <person name="Carter N.P."/>
            <person name="Chapman J.C."/>
            <person name="Clark S.Y."/>
            <person name="Clark G."/>
            <person name="Clee C.M."/>
            <person name="Clegg S."/>
            <person name="Cobley V."/>
            <person name="Collier R.E."/>
            <person name="Collins J.E."/>
            <person name="Colman L.K."/>
            <person name="Corby N.R."/>
            <person name="Coville G.J."/>
            <person name="Culley K.M."/>
            <person name="Dhami P."/>
            <person name="Davies J."/>
            <person name="Dunn M."/>
            <person name="Earthrowl M.E."/>
            <person name="Ellington A.E."/>
            <person name="Evans K.A."/>
            <person name="Faulkner L."/>
            <person name="Francis M.D."/>
            <person name="Frankish A."/>
            <person name="Frankland J."/>
            <person name="French L."/>
            <person name="Garner P."/>
            <person name="Garnett J."/>
            <person name="Ghori M.J."/>
            <person name="Gilby L.M."/>
            <person name="Gillson C.J."/>
            <person name="Glithero R.J."/>
            <person name="Grafham D.V."/>
            <person name="Grant M."/>
            <person name="Gribble S."/>
            <person name="Griffiths C."/>
            <person name="Griffiths M.N.D."/>
            <person name="Hall R."/>
            <person name="Halls K.S."/>
            <person name="Hammond S."/>
            <person name="Harley J.L."/>
            <person name="Hart E.A."/>
            <person name="Heath P.D."/>
            <person name="Heathcott R."/>
            <person name="Holmes S.J."/>
            <person name="Howden P.J."/>
            <person name="Howe K.L."/>
            <person name="Howell G.R."/>
            <person name="Huckle E."/>
            <person name="Humphray S.J."/>
            <person name="Humphries M.D."/>
            <person name="Hunt A.R."/>
            <person name="Johnson C.M."/>
            <person name="Joy A.A."/>
            <person name="Kay M."/>
            <person name="Keenan S.J."/>
            <person name="Kimberley A.M."/>
            <person name="King A."/>
            <person name="Laird G.K."/>
            <person name="Langford C."/>
            <person name="Lawlor S."/>
            <person name="Leongamornlert D.A."/>
            <person name="Leversha M."/>
            <person name="Lloyd C.R."/>
            <person name="Lloyd D.M."/>
            <person name="Loveland J.E."/>
            <person name="Lovell J."/>
            <person name="Martin S."/>
            <person name="Mashreghi-Mohammadi M."/>
            <person name="Maslen G.L."/>
            <person name="Matthews L."/>
            <person name="McCann O.T."/>
            <person name="McLaren S.J."/>
            <person name="McLay K."/>
            <person name="McMurray A."/>
            <person name="Moore M.J.F."/>
            <person name="Mullikin J.C."/>
            <person name="Niblett D."/>
            <person name="Nickerson T."/>
            <person name="Novik K.L."/>
            <person name="Oliver K."/>
            <person name="Overton-Larty E.K."/>
            <person name="Parker A."/>
            <person name="Patel R."/>
            <person name="Pearce A.V."/>
            <person name="Peck A.I."/>
            <person name="Phillimore B.J.C.T."/>
            <person name="Phillips S."/>
            <person name="Plumb R.W."/>
            <person name="Porter K.M."/>
            <person name="Ramsey Y."/>
            <person name="Ranby S.A."/>
            <person name="Rice C.M."/>
            <person name="Ross M.T."/>
            <person name="Searle S.M."/>
            <person name="Sehra H.K."/>
            <person name="Sheridan E."/>
            <person name="Skuce C.D."/>
            <person name="Smith S."/>
            <person name="Smith M."/>
            <person name="Spraggon L."/>
            <person name="Squares S.L."/>
            <person name="Steward C.A."/>
            <person name="Sycamore N."/>
            <person name="Tamlyn-Hall G."/>
            <person name="Tester J."/>
            <person name="Theaker A.J."/>
            <person name="Thomas D.W."/>
            <person name="Thorpe A."/>
            <person name="Tracey A."/>
            <person name="Tromans A."/>
            <person name="Tubby B."/>
            <person name="Wall M."/>
            <person name="Wallis J.M."/>
            <person name="West A.P."/>
            <person name="White S.S."/>
            <person name="Whitehead S.L."/>
            <person name="Whittaker H."/>
            <person name="Wild A."/>
            <person name="Willey D.J."/>
            <person name="Wilmer T.E."/>
            <person name="Wood J.M."/>
            <person name="Wray P.W."/>
            <person name="Wyatt J.C."/>
            <person name="Young L."/>
            <person name="Younger R.M."/>
            <person name="Bentley D.R."/>
            <person name="Coulson A."/>
            <person name="Durbin R.M."/>
            <person name="Hubbard T."/>
            <person name="Sulston J.E."/>
            <person name="Dunham I."/>
            <person name="Rogers J."/>
            <person name="Beck S."/>
        </authorList>
    </citation>
    <scope>NUCLEOTIDE SEQUENCE [LARGE SCALE GENOMIC DNA]</scope>
</reference>
<reference key="3">
    <citation type="journal article" date="2004" name="Genome Res.">
        <title>The status, quality, and expansion of the NIH full-length cDNA project: the Mammalian Gene Collection (MGC).</title>
        <authorList>
            <consortium name="The MGC Project Team"/>
        </authorList>
    </citation>
    <scope>NUCLEOTIDE SEQUENCE [LARGE SCALE MRNA] (ISOFORM SHORT)</scope>
    <source>
        <tissue>Testis</tissue>
    </source>
</reference>
<reference key="4">
    <citation type="journal article" date="1991" name="Proc. Natl. Acad. Sci. U.S.A.">
        <title>A cDNA encoding a human CCAAT-binding protein cloned by functional complementation in yeast.</title>
        <authorList>
            <person name="Becker D.M."/>
            <person name="Fikes J.D."/>
            <person name="Guarente L."/>
        </authorList>
    </citation>
    <scope>NUCLEOTIDE SEQUENCE [MRNA] OF 91-347</scope>
</reference>
<reference key="5">
    <citation type="journal article" date="1999" name="Biochem. Biophys. Res. Commun.">
        <title>Human ZHX1: cloning, chromosomal location, and interaction with transcription factor NF-Y.</title>
        <authorList>
            <person name="Yamada K."/>
            <person name="Printz R.L."/>
            <person name="Osawa H."/>
            <person name="Granner D.K."/>
        </authorList>
    </citation>
    <scope>INTERACTION WITH ZHX1</scope>
</reference>
<reference key="6">
    <citation type="journal article" date="1999" name="FEBS Lett.">
        <title>Identification of proteins that interact with NF-YA.</title>
        <authorList>
            <person name="Yamada K."/>
            <person name="Osawa H."/>
            <person name="Granner D.K."/>
        </authorList>
    </citation>
    <scope>INTERACTION WITH ZHX1</scope>
</reference>
<reference key="7">
    <citation type="journal article" date="2003" name="Biochem. J.">
        <title>Analysis of zinc-fingers and homeoboxes (ZHX)-1-interacting proteins: molecular cloning and characterization of a member of the ZHX family, ZHX3.</title>
        <authorList>
            <person name="Yamada K."/>
            <person name="Kawata H."/>
            <person name="Shou Z."/>
            <person name="Hirano S."/>
            <person name="Mizutani T."/>
            <person name="Yazawa T."/>
            <person name="Sekiguchi T."/>
            <person name="Yoshino M."/>
            <person name="Kajitani T."/>
            <person name="Miyamoto K."/>
        </authorList>
    </citation>
    <scope>INTERACTION WITH ZFX3</scope>
    <source>
        <tissue>Testis</tissue>
    </source>
</reference>
<reference key="8">
    <citation type="journal article" date="2003" name="Biochem. J.">
        <title>Zinc-fingers and homeoboxes (ZHX) 2, a novel member of the ZHX family, functions as a transcriptional repressor.</title>
        <authorList>
            <person name="Kawata H."/>
            <person name="Yamada K."/>
            <person name="Shou Z."/>
            <person name="Mizutani T."/>
            <person name="Yazawa T."/>
            <person name="Yoshino M."/>
            <person name="Sekiguchi T."/>
            <person name="Kajitani T."/>
            <person name="Miyamoto K."/>
        </authorList>
    </citation>
    <scope>FUNCTION</scope>
    <scope>INTERACTION WITH ZHX2</scope>
    <source>
        <tissue>Testis</tissue>
    </source>
</reference>
<reference key="9">
    <citation type="journal article" date="2008" name="Proc. Natl. Acad. Sci. U.S.A.">
        <title>A quantitative atlas of mitotic phosphorylation.</title>
        <authorList>
            <person name="Dephoure N."/>
            <person name="Zhou C."/>
            <person name="Villen J."/>
            <person name="Beausoleil S.A."/>
            <person name="Bakalarski C.E."/>
            <person name="Elledge S.J."/>
            <person name="Gygi S.P."/>
        </authorList>
    </citation>
    <scope>PHOSPHORYLATION [LARGE SCALE ANALYSIS] AT SER-326</scope>
    <scope>IDENTIFICATION BY MASS SPECTROMETRY [LARGE SCALE ANALYSIS]</scope>
    <source>
        <tissue>Cervix carcinoma</tissue>
    </source>
</reference>
<reference key="10">
    <citation type="journal article" date="2009" name="Biochem. Biophys. Res. Commun.">
        <title>O-GlcNAcylation of Sp1 interrupts Sp1 interaction with NF-Y.</title>
        <authorList>
            <person name="Lim K."/>
            <person name="Chang H.I."/>
        </authorList>
    </citation>
    <scope>INTERACTION WITH SP1</scope>
</reference>
<reference key="11">
    <citation type="journal article" date="2013" name="J. Proteome Res.">
        <title>Toward a comprehensive characterization of a human cancer cell phosphoproteome.</title>
        <authorList>
            <person name="Zhou H."/>
            <person name="Di Palma S."/>
            <person name="Preisinger C."/>
            <person name="Peng M."/>
            <person name="Polat A.N."/>
            <person name="Heck A.J."/>
            <person name="Mohammed S."/>
        </authorList>
    </citation>
    <scope>PHOSPHORYLATION [LARGE SCALE ANALYSIS] AT SER-326</scope>
    <scope>IDENTIFICATION BY MASS SPECTROMETRY [LARGE SCALE ANALYSIS]</scope>
    <source>
        <tissue>Cervix carcinoma</tissue>
        <tissue>Erythroleukemia</tissue>
    </source>
</reference>
<reference key="12">
    <citation type="journal article" date="2014" name="J. Proteomics">
        <title>An enzyme assisted RP-RPLC approach for in-depth analysis of human liver phosphoproteome.</title>
        <authorList>
            <person name="Bian Y."/>
            <person name="Song C."/>
            <person name="Cheng K."/>
            <person name="Dong M."/>
            <person name="Wang F."/>
            <person name="Huang J."/>
            <person name="Sun D."/>
            <person name="Wang L."/>
            <person name="Ye M."/>
            <person name="Zou H."/>
        </authorList>
    </citation>
    <scope>IDENTIFICATION BY MASS SPECTROMETRY [LARGE SCALE ANALYSIS]</scope>
    <source>
        <tissue>Liver</tissue>
    </source>
</reference>
<reference key="13">
    <citation type="journal article" date="2013" name="Cell">
        <title>Sequence-specific transcription factor NF-Y displays histone-like DNA binding and H2B-like ubiquitination.</title>
        <authorList>
            <person name="Nardini M."/>
            <person name="Gnesutta N."/>
            <person name="Donati G."/>
            <person name="Gatta R."/>
            <person name="Forni C."/>
            <person name="Fossati A."/>
            <person name="Vonrhein C."/>
            <person name="Moras D."/>
            <person name="Romier C."/>
            <person name="Bolognesi M."/>
            <person name="Mantovani R."/>
        </authorList>
    </citation>
    <scope>X-RAY CRYSTALLOGRAPHY (3.08 ANGSTROMS) OF 262-332 IN COMPLEX WITH NYFB; NYFC AND PROMOTER DNA</scope>
    <scope>SUBUNIT</scope>
</reference>
<dbReference type="EMBL" id="X59711">
    <property type="protein sequence ID" value="CAA42231.1"/>
    <property type="molecule type" value="mRNA"/>
</dbReference>
<dbReference type="EMBL" id="AL031778">
    <property type="status" value="NOT_ANNOTATED_CDS"/>
    <property type="molecule type" value="Genomic_DNA"/>
</dbReference>
<dbReference type="EMBL" id="BC039244">
    <property type="protein sequence ID" value="AAH39244.1"/>
    <property type="molecule type" value="mRNA"/>
</dbReference>
<dbReference type="EMBL" id="M59079">
    <property type="protein sequence ID" value="AAA35950.1"/>
    <property type="molecule type" value="mRNA"/>
</dbReference>
<dbReference type="CCDS" id="CCDS4849.1">
    <molecule id="P23511-1"/>
</dbReference>
<dbReference type="CCDS" id="CCDS4850.1">
    <molecule id="P23511-2"/>
</dbReference>
<dbReference type="PIR" id="S22816">
    <property type="entry name" value="A39123"/>
</dbReference>
<dbReference type="RefSeq" id="NP_002496.1">
    <molecule id="P23511-1"/>
    <property type="nucleotide sequence ID" value="NM_002505.5"/>
</dbReference>
<dbReference type="RefSeq" id="NP_068351.1">
    <molecule id="P23511-2"/>
    <property type="nucleotide sequence ID" value="NM_021705.4"/>
</dbReference>
<dbReference type="PDB" id="4AWL">
    <property type="method" value="X-ray"/>
    <property type="resolution" value="3.08 A"/>
    <property type="chains" value="A=262-332"/>
</dbReference>
<dbReference type="PDB" id="6QMP">
    <property type="method" value="X-ray"/>
    <property type="resolution" value="2.00 A"/>
    <property type="chains" value="A=267-295"/>
</dbReference>
<dbReference type="PDB" id="6QMQ">
    <property type="method" value="X-ray"/>
    <property type="resolution" value="2.50 A"/>
    <property type="chains" value="A=267-285"/>
</dbReference>
<dbReference type="PDB" id="6QMS">
    <property type="method" value="X-ray"/>
    <property type="resolution" value="1.80 A"/>
    <property type="chains" value="A=267-285"/>
</dbReference>
<dbReference type="PDB" id="8QU2">
    <property type="method" value="X-ray"/>
    <property type="resolution" value="1.45 A"/>
    <property type="chains" value="A=270-285"/>
</dbReference>
<dbReference type="PDB" id="8QU3">
    <property type="method" value="X-ray"/>
    <property type="resolution" value="1.41 A"/>
    <property type="chains" value="A=270-282"/>
</dbReference>
<dbReference type="PDB" id="8QU4">
    <property type="method" value="X-ray"/>
    <property type="resolution" value="1.38 A"/>
    <property type="chains" value="A=270-282"/>
</dbReference>
<dbReference type="PDBsum" id="4AWL"/>
<dbReference type="PDBsum" id="6QMP"/>
<dbReference type="PDBsum" id="6QMQ"/>
<dbReference type="PDBsum" id="6QMS"/>
<dbReference type="PDBsum" id="8QU2"/>
<dbReference type="PDBsum" id="8QU3"/>
<dbReference type="PDBsum" id="8QU4"/>
<dbReference type="SASBDB" id="P23511"/>
<dbReference type="SMR" id="P23511"/>
<dbReference type="BioGRID" id="110866">
    <property type="interactions" value="99"/>
</dbReference>
<dbReference type="ComplexPortal" id="CPX-1956">
    <property type="entry name" value="CCAAT-binding factor complex"/>
</dbReference>
<dbReference type="CORUM" id="P23511"/>
<dbReference type="FunCoup" id="P23511">
    <property type="interactions" value="4181"/>
</dbReference>
<dbReference type="IntAct" id="P23511">
    <property type="interactions" value="46"/>
</dbReference>
<dbReference type="MINT" id="P23511"/>
<dbReference type="STRING" id="9606.ENSP00000345702"/>
<dbReference type="GlyCosmos" id="P23511">
    <property type="glycosylation" value="4 sites, 2 glycans"/>
</dbReference>
<dbReference type="GlyGen" id="P23511">
    <property type="glycosylation" value="7 sites, 2 O-linked glycans (6 sites)"/>
</dbReference>
<dbReference type="iPTMnet" id="P23511"/>
<dbReference type="PhosphoSitePlus" id="P23511"/>
<dbReference type="BioMuta" id="NFYA"/>
<dbReference type="DMDM" id="115844"/>
<dbReference type="jPOST" id="P23511"/>
<dbReference type="MassIVE" id="P23511"/>
<dbReference type="PaxDb" id="9606-ENSP00000345702"/>
<dbReference type="PeptideAtlas" id="P23511"/>
<dbReference type="ProteomicsDB" id="54123">
    <molecule id="P23511-1"/>
</dbReference>
<dbReference type="ProteomicsDB" id="54124">
    <molecule id="P23511-2"/>
</dbReference>
<dbReference type="Pumba" id="P23511"/>
<dbReference type="Antibodypedia" id="3982">
    <property type="antibodies" value="226 antibodies from 35 providers"/>
</dbReference>
<dbReference type="DNASU" id="4800"/>
<dbReference type="Ensembl" id="ENST00000341376.11">
    <molecule id="P23511-1"/>
    <property type="protein sequence ID" value="ENSP00000345702.6"/>
    <property type="gene ID" value="ENSG00000001167.15"/>
</dbReference>
<dbReference type="Ensembl" id="ENST00000353205.5">
    <molecule id="P23511-2"/>
    <property type="protein sequence ID" value="ENSP00000229418.6"/>
    <property type="gene ID" value="ENSG00000001167.15"/>
</dbReference>
<dbReference type="GeneID" id="4800"/>
<dbReference type="KEGG" id="hsa:4800"/>
<dbReference type="MANE-Select" id="ENST00000341376.11">
    <property type="protein sequence ID" value="ENSP00000345702.6"/>
    <property type="RefSeq nucleotide sequence ID" value="NM_002505.5"/>
    <property type="RefSeq protein sequence ID" value="NP_002496.1"/>
</dbReference>
<dbReference type="UCSC" id="uc003opo.4">
    <molecule id="P23511-1"/>
    <property type="organism name" value="human"/>
</dbReference>
<dbReference type="AGR" id="HGNC:7804"/>
<dbReference type="CTD" id="4800"/>
<dbReference type="DisGeNET" id="4800"/>
<dbReference type="GeneCards" id="NFYA"/>
<dbReference type="HGNC" id="HGNC:7804">
    <property type="gene designation" value="NFYA"/>
</dbReference>
<dbReference type="HPA" id="ENSG00000001167">
    <property type="expression patterns" value="Low tissue specificity"/>
</dbReference>
<dbReference type="MIM" id="189903">
    <property type="type" value="gene"/>
</dbReference>
<dbReference type="neXtProt" id="NX_P23511"/>
<dbReference type="OpenTargets" id="ENSG00000001167"/>
<dbReference type="PharmGKB" id="PA31609"/>
<dbReference type="VEuPathDB" id="HostDB:ENSG00000001167"/>
<dbReference type="eggNOG" id="KOG1561">
    <property type="taxonomic scope" value="Eukaryota"/>
</dbReference>
<dbReference type="GeneTree" id="ENSGT00390000015714"/>
<dbReference type="HOGENOM" id="CLU_071609_1_0_1"/>
<dbReference type="InParanoid" id="P23511"/>
<dbReference type="OMA" id="VAHMIRV"/>
<dbReference type="OrthoDB" id="1097733at2759"/>
<dbReference type="PAN-GO" id="P23511">
    <property type="GO annotations" value="3 GO annotations based on evolutionary models"/>
</dbReference>
<dbReference type="PhylomeDB" id="P23511"/>
<dbReference type="TreeFam" id="TF323257"/>
<dbReference type="PathwayCommons" id="P23511"/>
<dbReference type="Reactome" id="R-HSA-1989781">
    <property type="pathway name" value="PPARA activates gene expression"/>
</dbReference>
<dbReference type="Reactome" id="R-HSA-2426168">
    <property type="pathway name" value="Activation of gene expression by SREBF (SREBP)"/>
</dbReference>
<dbReference type="Reactome" id="R-HSA-380994">
    <property type="pathway name" value="ATF4 activates genes in response to endoplasmic reticulum stress"/>
</dbReference>
<dbReference type="Reactome" id="R-HSA-381183">
    <property type="pathway name" value="ATF6 (ATF6-alpha) activates chaperone genes"/>
</dbReference>
<dbReference type="Reactome" id="R-HSA-9614657">
    <property type="pathway name" value="FOXO-mediated transcription of cell death genes"/>
</dbReference>
<dbReference type="SignaLink" id="P23511"/>
<dbReference type="SIGNOR" id="P23511"/>
<dbReference type="BioGRID-ORCS" id="4800">
    <property type="hits" value="184 hits in 1179 CRISPR screens"/>
</dbReference>
<dbReference type="CD-CODE" id="B5B9A610">
    <property type="entry name" value="PML body"/>
</dbReference>
<dbReference type="ChiTaRS" id="NFYA">
    <property type="organism name" value="human"/>
</dbReference>
<dbReference type="EvolutionaryTrace" id="P23511"/>
<dbReference type="GeneWiki" id="NFYA"/>
<dbReference type="GenomeRNAi" id="4800"/>
<dbReference type="Pharos" id="P23511">
    <property type="development level" value="Tbio"/>
</dbReference>
<dbReference type="PRO" id="PR:P23511"/>
<dbReference type="Proteomes" id="UP000005640">
    <property type="component" value="Chromosome 6"/>
</dbReference>
<dbReference type="RNAct" id="P23511">
    <property type="molecule type" value="protein"/>
</dbReference>
<dbReference type="Bgee" id="ENSG00000001167">
    <property type="expression patterns" value="Expressed in cortical plate and 186 other cell types or tissues"/>
</dbReference>
<dbReference type="ExpressionAtlas" id="P23511">
    <property type="expression patterns" value="baseline and differential"/>
</dbReference>
<dbReference type="GO" id="GO:0016602">
    <property type="term" value="C:CCAAT-binding factor complex"/>
    <property type="evidence" value="ECO:0000314"/>
    <property type="project" value="UniProtKB"/>
</dbReference>
<dbReference type="GO" id="GO:0000785">
    <property type="term" value="C:chromatin"/>
    <property type="evidence" value="ECO:0000247"/>
    <property type="project" value="NTNU_SB"/>
</dbReference>
<dbReference type="GO" id="GO:0005654">
    <property type="term" value="C:nucleoplasm"/>
    <property type="evidence" value="ECO:0000314"/>
    <property type="project" value="HPA"/>
</dbReference>
<dbReference type="GO" id="GO:0005634">
    <property type="term" value="C:nucleus"/>
    <property type="evidence" value="ECO:0000314"/>
    <property type="project" value="UniProtKB"/>
</dbReference>
<dbReference type="GO" id="GO:0032993">
    <property type="term" value="C:protein-DNA complex"/>
    <property type="evidence" value="ECO:0000314"/>
    <property type="project" value="ParkinsonsUK-UCL"/>
</dbReference>
<dbReference type="GO" id="GO:0090575">
    <property type="term" value="C:RNA polymerase II transcription regulator complex"/>
    <property type="evidence" value="ECO:0000314"/>
    <property type="project" value="NTNU_SB"/>
</dbReference>
<dbReference type="GO" id="GO:0003677">
    <property type="term" value="F:DNA binding"/>
    <property type="evidence" value="ECO:0000314"/>
    <property type="project" value="UniProtKB"/>
</dbReference>
<dbReference type="GO" id="GO:0003700">
    <property type="term" value="F:DNA-binding transcription factor activity"/>
    <property type="evidence" value="ECO:0000304"/>
    <property type="project" value="ProtInc"/>
</dbReference>
<dbReference type="GO" id="GO:0000981">
    <property type="term" value="F:DNA-binding transcription factor activity, RNA polymerase II-specific"/>
    <property type="evidence" value="ECO:0000247"/>
    <property type="project" value="NTNU_SB"/>
</dbReference>
<dbReference type="GO" id="GO:0000978">
    <property type="term" value="F:RNA polymerase II cis-regulatory region sequence-specific DNA binding"/>
    <property type="evidence" value="ECO:0000250"/>
    <property type="project" value="UniProtKB"/>
</dbReference>
<dbReference type="GO" id="GO:0045893">
    <property type="term" value="P:positive regulation of DNA-templated transcription"/>
    <property type="evidence" value="ECO:0000250"/>
    <property type="project" value="UniProtKB"/>
</dbReference>
<dbReference type="GO" id="GO:0045944">
    <property type="term" value="P:positive regulation of transcription by RNA polymerase II"/>
    <property type="evidence" value="ECO:0000314"/>
    <property type="project" value="ComplexPortal"/>
</dbReference>
<dbReference type="GO" id="GO:0006355">
    <property type="term" value="P:regulation of DNA-templated transcription"/>
    <property type="evidence" value="ECO:0000314"/>
    <property type="project" value="UniProtKB"/>
</dbReference>
<dbReference type="GO" id="GO:0006357">
    <property type="term" value="P:regulation of transcription by RNA polymerase II"/>
    <property type="evidence" value="ECO:0000318"/>
    <property type="project" value="GO_Central"/>
</dbReference>
<dbReference type="GO" id="GO:0048511">
    <property type="term" value="P:rhythmic process"/>
    <property type="evidence" value="ECO:0007669"/>
    <property type="project" value="UniProtKB-KW"/>
</dbReference>
<dbReference type="GO" id="GO:0006366">
    <property type="term" value="P:transcription by RNA polymerase II"/>
    <property type="evidence" value="ECO:0000304"/>
    <property type="project" value="ProtInc"/>
</dbReference>
<dbReference type="Gene3D" id="6.10.250.2430">
    <property type="match status" value="1"/>
</dbReference>
<dbReference type="InterPro" id="IPR018362">
    <property type="entry name" value="CCAAT-binding_factor_CS"/>
</dbReference>
<dbReference type="InterPro" id="IPR001289">
    <property type="entry name" value="NFYA"/>
</dbReference>
<dbReference type="PANTHER" id="PTHR12632">
    <property type="entry name" value="TRANSCRIPTION FACTOR NF-Y ALPHA-RELATED"/>
    <property type="match status" value="1"/>
</dbReference>
<dbReference type="Pfam" id="PF02045">
    <property type="entry name" value="CBFB_NFYA"/>
    <property type="match status" value="1"/>
</dbReference>
<dbReference type="PRINTS" id="PR00616">
    <property type="entry name" value="CCAATSUBUNTB"/>
</dbReference>
<dbReference type="SMART" id="SM00521">
    <property type="entry name" value="CBF"/>
    <property type="match status" value="1"/>
</dbReference>
<dbReference type="PROSITE" id="PS00686">
    <property type="entry name" value="NFYA_HAP2_1"/>
    <property type="match status" value="1"/>
</dbReference>
<dbReference type="PROSITE" id="PS51152">
    <property type="entry name" value="NFYA_HAP2_2"/>
    <property type="match status" value="1"/>
</dbReference>
<sequence>MEQYTANSNSSTEQIVVQAGQIQQQQQGGVTAVQLQTEAQVASASGQQVQTLQVVQGQPLMVQVSGGQLITSTGQPIMVQAVPGGQGQTIMQVPVSGTQGLQQIQLVPPGQIQIQGGQAVQVQGQQGQTQQIIIQQPQTAVTAGQTQTQQQIAVQGQQVAQTAEGQTIVYQPVNADGTILQQVTVPVSGMITIPAASLAGAQIVQTGANTNTTSSGQGTVTVTLPVAGNVVNSGGMVMMVPGAGSVPAIQRIPLPGAEMLEEEPLYVNAKQYHRILKRRQARAKLEAEGKIPKERRKYLHESRHRHAMARKRGEGGRFFSPKEKDSPHMQDPNQADEEAMTQIIRVS</sequence>
<proteinExistence type="evidence at protein level"/>